<gene>
    <name evidence="1" type="primary">glk</name>
    <name type="ordered locus">Smal_1530</name>
</gene>
<keyword id="KW-0067">ATP-binding</keyword>
<keyword id="KW-0963">Cytoplasm</keyword>
<keyword id="KW-0324">Glycolysis</keyword>
<keyword id="KW-0418">Kinase</keyword>
<keyword id="KW-0547">Nucleotide-binding</keyword>
<keyword id="KW-0808">Transferase</keyword>
<comment type="catalytic activity">
    <reaction evidence="1">
        <text>D-glucose + ATP = D-glucose 6-phosphate + ADP + H(+)</text>
        <dbReference type="Rhea" id="RHEA:17825"/>
        <dbReference type="ChEBI" id="CHEBI:4167"/>
        <dbReference type="ChEBI" id="CHEBI:15378"/>
        <dbReference type="ChEBI" id="CHEBI:30616"/>
        <dbReference type="ChEBI" id="CHEBI:61548"/>
        <dbReference type="ChEBI" id="CHEBI:456216"/>
        <dbReference type="EC" id="2.7.1.2"/>
    </reaction>
</comment>
<comment type="subcellular location">
    <subcellularLocation>
        <location evidence="1">Cytoplasm</location>
    </subcellularLocation>
</comment>
<comment type="similarity">
    <text evidence="1">Belongs to the bacterial glucokinase family.</text>
</comment>
<dbReference type="EC" id="2.7.1.2" evidence="1"/>
<dbReference type="EMBL" id="CP001111">
    <property type="protein sequence ID" value="ACF51235.1"/>
    <property type="molecule type" value="Genomic_DNA"/>
</dbReference>
<dbReference type="RefSeq" id="WP_012510708.1">
    <property type="nucleotide sequence ID" value="NC_011071.1"/>
</dbReference>
<dbReference type="SMR" id="B4SRZ6"/>
<dbReference type="STRING" id="391008.Smal_1530"/>
<dbReference type="KEGG" id="smt:Smal_1530"/>
<dbReference type="eggNOG" id="COG0837">
    <property type="taxonomic scope" value="Bacteria"/>
</dbReference>
<dbReference type="HOGENOM" id="CLU_042582_1_0_6"/>
<dbReference type="OrthoDB" id="9800595at2"/>
<dbReference type="Proteomes" id="UP000001867">
    <property type="component" value="Chromosome"/>
</dbReference>
<dbReference type="GO" id="GO:0005829">
    <property type="term" value="C:cytosol"/>
    <property type="evidence" value="ECO:0007669"/>
    <property type="project" value="TreeGrafter"/>
</dbReference>
<dbReference type="GO" id="GO:0005524">
    <property type="term" value="F:ATP binding"/>
    <property type="evidence" value="ECO:0007669"/>
    <property type="project" value="UniProtKB-UniRule"/>
</dbReference>
<dbReference type="GO" id="GO:0005536">
    <property type="term" value="F:D-glucose binding"/>
    <property type="evidence" value="ECO:0007669"/>
    <property type="project" value="InterPro"/>
</dbReference>
<dbReference type="GO" id="GO:0004340">
    <property type="term" value="F:glucokinase activity"/>
    <property type="evidence" value="ECO:0007669"/>
    <property type="project" value="UniProtKB-UniRule"/>
</dbReference>
<dbReference type="GO" id="GO:0006096">
    <property type="term" value="P:glycolytic process"/>
    <property type="evidence" value="ECO:0007669"/>
    <property type="project" value="UniProtKB-UniRule"/>
</dbReference>
<dbReference type="CDD" id="cd24008">
    <property type="entry name" value="ASKHA_NBD_GLK"/>
    <property type="match status" value="1"/>
</dbReference>
<dbReference type="Gene3D" id="3.30.420.40">
    <property type="match status" value="1"/>
</dbReference>
<dbReference type="Gene3D" id="3.40.367.20">
    <property type="match status" value="1"/>
</dbReference>
<dbReference type="HAMAP" id="MF_00524">
    <property type="entry name" value="Glucokinase"/>
    <property type="match status" value="1"/>
</dbReference>
<dbReference type="InterPro" id="IPR043129">
    <property type="entry name" value="ATPase_NBD"/>
</dbReference>
<dbReference type="InterPro" id="IPR050201">
    <property type="entry name" value="Bacterial_glucokinase"/>
</dbReference>
<dbReference type="InterPro" id="IPR003836">
    <property type="entry name" value="Glucokinase"/>
</dbReference>
<dbReference type="NCBIfam" id="TIGR00749">
    <property type="entry name" value="glk"/>
    <property type="match status" value="1"/>
</dbReference>
<dbReference type="NCBIfam" id="NF009073">
    <property type="entry name" value="PRK12408.1"/>
    <property type="match status" value="1"/>
</dbReference>
<dbReference type="PANTHER" id="PTHR47690">
    <property type="entry name" value="GLUCOKINASE"/>
    <property type="match status" value="1"/>
</dbReference>
<dbReference type="PANTHER" id="PTHR47690:SF1">
    <property type="entry name" value="GLUCOKINASE"/>
    <property type="match status" value="1"/>
</dbReference>
<dbReference type="Pfam" id="PF02685">
    <property type="entry name" value="Glucokinase"/>
    <property type="match status" value="1"/>
</dbReference>
<dbReference type="SUPFAM" id="SSF53067">
    <property type="entry name" value="Actin-like ATPase domain"/>
    <property type="match status" value="1"/>
</dbReference>
<accession>B4SRZ6</accession>
<proteinExistence type="inferred from homology"/>
<organism>
    <name type="scientific">Stenotrophomonas maltophilia (strain R551-3)</name>
    <dbReference type="NCBI Taxonomy" id="391008"/>
    <lineage>
        <taxon>Bacteria</taxon>
        <taxon>Pseudomonadati</taxon>
        <taxon>Pseudomonadota</taxon>
        <taxon>Gammaproteobacteria</taxon>
        <taxon>Lysobacterales</taxon>
        <taxon>Lysobacteraceae</taxon>
        <taxon>Stenotrophomonas</taxon>
        <taxon>Stenotrophomonas maltophilia group</taxon>
    </lineage>
</organism>
<protein>
    <recommendedName>
        <fullName evidence="1">Glucokinase</fullName>
        <ecNumber evidence="1">2.7.1.2</ecNumber>
    </recommendedName>
    <alternativeName>
        <fullName evidence="1">Glucose kinase</fullName>
    </alternativeName>
</protein>
<feature type="chain" id="PRO_1000127726" description="Glucokinase">
    <location>
        <begin position="1"/>
        <end position="335"/>
    </location>
</feature>
<feature type="binding site" evidence="1">
    <location>
        <begin position="11"/>
        <end position="16"/>
    </location>
    <ligand>
        <name>ATP</name>
        <dbReference type="ChEBI" id="CHEBI:30616"/>
    </ligand>
</feature>
<name>GLK_STRM5</name>
<evidence type="ECO:0000255" key="1">
    <source>
        <dbReference type="HAMAP-Rule" id="MF_00524"/>
    </source>
</evidence>
<sequence>MSASSQPVLVADIGGTNARFALADTSLDAPLQQDSIREYAVAEFPSLGDAARHHLEQIGATASRGVFAVAGRVDGDEARITNHPWVISRSRTAAMLGFDELHLINDFAAQAMAISLLQSDDVVQVGGAAWVPGKPGQPRNYAVIGPGTGLGVGGLILRHGRCYPLETEGGHVSFPPGTPEEIRILEILSEQFGRVSNERLICGPGLVNIHRAVCEMAGIDPGQLQPVDVTARALHGDPQAMRTVDVFCAVFGAIAGDLVLTQGAWDGVFLTGGLTPKMLDSLQHSGFRQRFEHKGRFSSIMARVPSLAVMHPHAGLLGAAAYAADAERDAPGVAA</sequence>
<reference key="1">
    <citation type="submission" date="2008-06" db="EMBL/GenBank/DDBJ databases">
        <title>Complete sequence of Stenotrophomonas maltophilia R551-3.</title>
        <authorList>
            <consortium name="US DOE Joint Genome Institute"/>
            <person name="Lucas S."/>
            <person name="Copeland A."/>
            <person name="Lapidus A."/>
            <person name="Glavina del Rio T."/>
            <person name="Dalin E."/>
            <person name="Tice H."/>
            <person name="Pitluck S."/>
            <person name="Chain P."/>
            <person name="Malfatti S."/>
            <person name="Shin M."/>
            <person name="Vergez L."/>
            <person name="Lang D."/>
            <person name="Schmutz J."/>
            <person name="Larimer F."/>
            <person name="Land M."/>
            <person name="Hauser L."/>
            <person name="Kyrpides N."/>
            <person name="Mikhailova N."/>
            <person name="Taghavi S."/>
            <person name="Monchy S."/>
            <person name="Newman L."/>
            <person name="Vangronsveld J."/>
            <person name="van der Lelie D."/>
            <person name="Richardson P."/>
        </authorList>
    </citation>
    <scope>NUCLEOTIDE SEQUENCE [LARGE SCALE GENOMIC DNA]</scope>
    <source>
        <strain>R551-3</strain>
    </source>
</reference>